<comment type="interaction">
    <interactant intactId="EBI-16114877">
        <id>Q3UJK4</id>
    </interactant>
    <interactant intactId="EBI-16114899">
        <id>Q80X73</id>
        <label>Pelo</label>
    </interactant>
    <organismsDiffer>false</organismsDiffer>
    <experiments>3</experiments>
</comment>
<comment type="tissue specificity">
    <text evidence="5">Predominantly expressed in thymus, spleen, and testis. Expressed at lower levels in brain, heart, lung, kidney, and skeletal muscle. In testis, specifically expressed in spermatocytes and round spermatids.</text>
</comment>
<comment type="induction">
    <text evidence="4">Up-regulated in thioglycolate-elicited mouse peritoneal macrophages.</text>
</comment>
<comment type="similarity">
    <text evidence="2">Belongs to the TRAFAC class translation factor GTPase superfamily. Classic translation factor GTPase family. GTPBP1 subfamily.</text>
</comment>
<comment type="sequence caution" evidence="6">
    <conflict type="erroneous initiation">
        <sequence resource="EMBL-CDS" id="AAF78885"/>
    </conflict>
    <text>Truncated N-terminus.</text>
</comment>
<comment type="sequence caution" evidence="6">
    <conflict type="erroneous initiation">
        <sequence resource="EMBL-CDS" id="AAH49089"/>
    </conflict>
    <text>Truncated N-terminus.</text>
</comment>
<comment type="sequence caution" evidence="6">
    <conflict type="erroneous initiation">
        <sequence resource="EMBL-CDS" id="AAH51958"/>
    </conflict>
    <text>Truncated N-terminus.</text>
</comment>
<comment type="sequence caution" evidence="6">
    <conflict type="erroneous initiation">
        <sequence resource="EMBL-CDS" id="BAB12430"/>
    </conflict>
    <text>Truncated N-terminus.</text>
</comment>
<feature type="chain" id="PRO_0000248501" description="GTP-binding protein 2">
    <location>
        <begin position="1"/>
        <end position="602"/>
    </location>
</feature>
<feature type="domain" description="tr-type G" evidence="2">
    <location>
        <begin position="170"/>
        <end position="398"/>
    </location>
</feature>
<feature type="region of interest" description="Disordered" evidence="3">
    <location>
        <begin position="18"/>
        <end position="64"/>
    </location>
</feature>
<feature type="compositionally biased region" description="Gly residues" evidence="3">
    <location>
        <begin position="29"/>
        <end position="39"/>
    </location>
</feature>
<feature type="compositionally biased region" description="Basic residues" evidence="3">
    <location>
        <begin position="40"/>
        <end position="50"/>
    </location>
</feature>
<feature type="binding site" evidence="1">
    <location>
        <begin position="179"/>
        <end position="186"/>
    </location>
    <ligand>
        <name>GTP</name>
        <dbReference type="ChEBI" id="CHEBI:37565"/>
    </ligand>
</feature>
<feature type="binding site" evidence="1">
    <location>
        <begin position="260"/>
        <end position="264"/>
    </location>
    <ligand>
        <name>GTP</name>
        <dbReference type="ChEBI" id="CHEBI:37565"/>
    </ligand>
</feature>
<feature type="binding site" evidence="1">
    <location>
        <begin position="316"/>
        <end position="319"/>
    </location>
    <ligand>
        <name>GTP</name>
        <dbReference type="ChEBI" id="CHEBI:37565"/>
    </ligand>
</feature>
<feature type="sequence conflict" description="In Ref. 4; BAB12430." evidence="6" ref="4">
    <original>I</original>
    <variation>V</variation>
    <location>
        <position position="215"/>
    </location>
</feature>
<feature type="sequence conflict" description="In Ref. 4; BAB12430." evidence="6" ref="4">
    <original>P</original>
    <variation>S</variation>
    <location>
        <position position="394"/>
    </location>
</feature>
<feature type="sequence conflict" description="In Ref. 4; BAB12430." evidence="6" ref="4">
    <location>
        <position position="428"/>
    </location>
</feature>
<reference evidence="6 7" key="1">
    <citation type="journal article" date="2000" name="Biochem. Biophys. Res. Commun.">
        <title>Mouse and human GTPBP2, newly identified members of the GP-1 family of GTPase.</title>
        <authorList>
            <person name="Kudo H."/>
            <person name="Senju S."/>
            <person name="Mitsuya H."/>
            <person name="Nishimura Y."/>
        </authorList>
    </citation>
    <scope>NUCLEOTIDE SEQUENCE [MRNA]</scope>
    <scope>INDUCTION</scope>
    <source>
        <tissue evidence="7">Brain</tissue>
    </source>
</reference>
<reference evidence="10" key="2">
    <citation type="journal article" date="2005" name="Science">
        <title>The transcriptional landscape of the mammalian genome.</title>
        <authorList>
            <person name="Carninci P."/>
            <person name="Kasukawa T."/>
            <person name="Katayama S."/>
            <person name="Gough J."/>
            <person name="Frith M.C."/>
            <person name="Maeda N."/>
            <person name="Oyama R."/>
            <person name="Ravasi T."/>
            <person name="Lenhard B."/>
            <person name="Wells C."/>
            <person name="Kodzius R."/>
            <person name="Shimokawa K."/>
            <person name="Bajic V.B."/>
            <person name="Brenner S.E."/>
            <person name="Batalov S."/>
            <person name="Forrest A.R."/>
            <person name="Zavolan M."/>
            <person name="Davis M.J."/>
            <person name="Wilming L.G."/>
            <person name="Aidinis V."/>
            <person name="Allen J.E."/>
            <person name="Ambesi-Impiombato A."/>
            <person name="Apweiler R."/>
            <person name="Aturaliya R.N."/>
            <person name="Bailey T.L."/>
            <person name="Bansal M."/>
            <person name="Baxter L."/>
            <person name="Beisel K.W."/>
            <person name="Bersano T."/>
            <person name="Bono H."/>
            <person name="Chalk A.M."/>
            <person name="Chiu K.P."/>
            <person name="Choudhary V."/>
            <person name="Christoffels A."/>
            <person name="Clutterbuck D.R."/>
            <person name="Crowe M.L."/>
            <person name="Dalla E."/>
            <person name="Dalrymple B.P."/>
            <person name="de Bono B."/>
            <person name="Della Gatta G."/>
            <person name="di Bernardo D."/>
            <person name="Down T."/>
            <person name="Engstrom P."/>
            <person name="Fagiolini M."/>
            <person name="Faulkner G."/>
            <person name="Fletcher C.F."/>
            <person name="Fukushima T."/>
            <person name="Furuno M."/>
            <person name="Futaki S."/>
            <person name="Gariboldi M."/>
            <person name="Georgii-Hemming P."/>
            <person name="Gingeras T.R."/>
            <person name="Gojobori T."/>
            <person name="Green R.E."/>
            <person name="Gustincich S."/>
            <person name="Harbers M."/>
            <person name="Hayashi Y."/>
            <person name="Hensch T.K."/>
            <person name="Hirokawa N."/>
            <person name="Hill D."/>
            <person name="Huminiecki L."/>
            <person name="Iacono M."/>
            <person name="Ikeo K."/>
            <person name="Iwama A."/>
            <person name="Ishikawa T."/>
            <person name="Jakt M."/>
            <person name="Kanapin A."/>
            <person name="Katoh M."/>
            <person name="Kawasawa Y."/>
            <person name="Kelso J."/>
            <person name="Kitamura H."/>
            <person name="Kitano H."/>
            <person name="Kollias G."/>
            <person name="Krishnan S.P."/>
            <person name="Kruger A."/>
            <person name="Kummerfeld S.K."/>
            <person name="Kurochkin I.V."/>
            <person name="Lareau L.F."/>
            <person name="Lazarevic D."/>
            <person name="Lipovich L."/>
            <person name="Liu J."/>
            <person name="Liuni S."/>
            <person name="McWilliam S."/>
            <person name="Madan Babu M."/>
            <person name="Madera M."/>
            <person name="Marchionni L."/>
            <person name="Matsuda H."/>
            <person name="Matsuzawa S."/>
            <person name="Miki H."/>
            <person name="Mignone F."/>
            <person name="Miyake S."/>
            <person name="Morris K."/>
            <person name="Mottagui-Tabar S."/>
            <person name="Mulder N."/>
            <person name="Nakano N."/>
            <person name="Nakauchi H."/>
            <person name="Ng P."/>
            <person name="Nilsson R."/>
            <person name="Nishiguchi S."/>
            <person name="Nishikawa S."/>
            <person name="Nori F."/>
            <person name="Ohara O."/>
            <person name="Okazaki Y."/>
            <person name="Orlando V."/>
            <person name="Pang K.C."/>
            <person name="Pavan W.J."/>
            <person name="Pavesi G."/>
            <person name="Pesole G."/>
            <person name="Petrovsky N."/>
            <person name="Piazza S."/>
            <person name="Reed J."/>
            <person name="Reid J.F."/>
            <person name="Ring B.Z."/>
            <person name="Ringwald M."/>
            <person name="Rost B."/>
            <person name="Ruan Y."/>
            <person name="Salzberg S.L."/>
            <person name="Sandelin A."/>
            <person name="Schneider C."/>
            <person name="Schoenbach C."/>
            <person name="Sekiguchi K."/>
            <person name="Semple C.A."/>
            <person name="Seno S."/>
            <person name="Sessa L."/>
            <person name="Sheng Y."/>
            <person name="Shibata Y."/>
            <person name="Shimada H."/>
            <person name="Shimada K."/>
            <person name="Silva D."/>
            <person name="Sinclair B."/>
            <person name="Sperling S."/>
            <person name="Stupka E."/>
            <person name="Sugiura K."/>
            <person name="Sultana R."/>
            <person name="Takenaka Y."/>
            <person name="Taki K."/>
            <person name="Tammoja K."/>
            <person name="Tan S.L."/>
            <person name="Tang S."/>
            <person name="Taylor M.S."/>
            <person name="Tegner J."/>
            <person name="Teichmann S.A."/>
            <person name="Ueda H.R."/>
            <person name="van Nimwegen E."/>
            <person name="Verardo R."/>
            <person name="Wei C.L."/>
            <person name="Yagi K."/>
            <person name="Yamanishi H."/>
            <person name="Zabarovsky E."/>
            <person name="Zhu S."/>
            <person name="Zimmer A."/>
            <person name="Hide W."/>
            <person name="Bult C."/>
            <person name="Grimmond S.M."/>
            <person name="Teasdale R.D."/>
            <person name="Liu E.T."/>
            <person name="Brusic V."/>
            <person name="Quackenbush J."/>
            <person name="Wahlestedt C."/>
            <person name="Mattick J.S."/>
            <person name="Hume D.A."/>
            <person name="Kai C."/>
            <person name="Sasaki D."/>
            <person name="Tomaru Y."/>
            <person name="Fukuda S."/>
            <person name="Kanamori-Katayama M."/>
            <person name="Suzuki M."/>
            <person name="Aoki J."/>
            <person name="Arakawa T."/>
            <person name="Iida J."/>
            <person name="Imamura K."/>
            <person name="Itoh M."/>
            <person name="Kato T."/>
            <person name="Kawaji H."/>
            <person name="Kawagashira N."/>
            <person name="Kawashima T."/>
            <person name="Kojima M."/>
            <person name="Kondo S."/>
            <person name="Konno H."/>
            <person name="Nakano K."/>
            <person name="Ninomiya N."/>
            <person name="Nishio T."/>
            <person name="Okada M."/>
            <person name="Plessy C."/>
            <person name="Shibata K."/>
            <person name="Shiraki T."/>
            <person name="Suzuki S."/>
            <person name="Tagami M."/>
            <person name="Waki K."/>
            <person name="Watahiki A."/>
            <person name="Okamura-Oho Y."/>
            <person name="Suzuki H."/>
            <person name="Kawai J."/>
            <person name="Hayashizaki Y."/>
        </authorList>
    </citation>
    <scope>NUCLEOTIDE SEQUENCE [LARGE SCALE MRNA]</scope>
    <source>
        <strain evidence="10">DBA/2J</strain>
    </source>
</reference>
<reference evidence="8" key="3">
    <citation type="journal article" date="2004" name="Genome Res.">
        <title>The status, quality, and expansion of the NIH full-length cDNA project: the Mammalian Gene Collection (MGC).</title>
        <authorList>
            <consortium name="The MGC Project Team"/>
        </authorList>
    </citation>
    <scope>NUCLEOTIDE SEQUENCE [LARGE SCALE MRNA]</scope>
    <source>
        <strain evidence="8">C57BL/6J</strain>
        <tissue evidence="8">Brain</tissue>
    </source>
</reference>
<reference evidence="6 9" key="4">
    <citation type="journal article" date="2000" name="Gene">
        <title>Cloning, expression analysis, and chromosomal mapping of GTPBP2, a novel member of the G protein family.</title>
        <authorList>
            <person name="Watanabe M."/>
            <person name="Yoshida K."/>
            <person name="Hida M."/>
            <person name="Kato H."/>
            <person name="Uchida K."/>
            <person name="Yamaguchi R."/>
            <person name="Tateyama S."/>
            <person name="Sugano S."/>
        </authorList>
    </citation>
    <scope>NUCLEOTIDE SEQUENCE [MRNA] OF 86-602</scope>
    <scope>TISSUE SPECIFICITY</scope>
</reference>
<reference key="5">
    <citation type="journal article" date="2010" name="Cell">
        <title>A tissue-specific atlas of mouse protein phosphorylation and expression.</title>
        <authorList>
            <person name="Huttlin E.L."/>
            <person name="Jedrychowski M.P."/>
            <person name="Elias J.E."/>
            <person name="Goswami T."/>
            <person name="Rad R."/>
            <person name="Beausoleil S.A."/>
            <person name="Villen J."/>
            <person name="Haas W."/>
            <person name="Sowa M.E."/>
            <person name="Gygi S.P."/>
        </authorList>
    </citation>
    <scope>IDENTIFICATION BY MASS SPECTROMETRY [LARGE SCALE ANALYSIS]</scope>
    <source>
        <tissue>Spleen</tissue>
    </source>
</reference>
<keyword id="KW-0342">GTP-binding</keyword>
<keyword id="KW-0547">Nucleotide-binding</keyword>
<keyword id="KW-1185">Reference proteome</keyword>
<organism>
    <name type="scientific">Mus musculus</name>
    <name type="common">Mouse</name>
    <dbReference type="NCBI Taxonomy" id="10090"/>
    <lineage>
        <taxon>Eukaryota</taxon>
        <taxon>Metazoa</taxon>
        <taxon>Chordata</taxon>
        <taxon>Craniata</taxon>
        <taxon>Vertebrata</taxon>
        <taxon>Euteleostomi</taxon>
        <taxon>Mammalia</taxon>
        <taxon>Eutheria</taxon>
        <taxon>Euarchontoglires</taxon>
        <taxon>Glires</taxon>
        <taxon>Rodentia</taxon>
        <taxon>Myomorpha</taxon>
        <taxon>Muroidea</taxon>
        <taxon>Muridae</taxon>
        <taxon>Murinae</taxon>
        <taxon>Mus</taxon>
        <taxon>Mus</taxon>
    </lineage>
</organism>
<dbReference type="EMBL" id="AF168991">
    <property type="protein sequence ID" value="AAF78885.1"/>
    <property type="status" value="ALT_INIT"/>
    <property type="molecule type" value="mRNA"/>
</dbReference>
<dbReference type="EMBL" id="AK146415">
    <property type="protein sequence ID" value="BAE27151.1"/>
    <property type="molecule type" value="mRNA"/>
</dbReference>
<dbReference type="EMBL" id="BC049089">
    <property type="protein sequence ID" value="AAH49089.1"/>
    <property type="status" value="ALT_INIT"/>
    <property type="molecule type" value="mRNA"/>
</dbReference>
<dbReference type="EMBL" id="BC051958">
    <property type="protein sequence ID" value="AAH51958.1"/>
    <property type="status" value="ALT_INIT"/>
    <property type="molecule type" value="mRNA"/>
</dbReference>
<dbReference type="EMBL" id="AB024573">
    <property type="protein sequence ID" value="BAB12430.1"/>
    <property type="status" value="ALT_INIT"/>
    <property type="molecule type" value="mRNA"/>
</dbReference>
<dbReference type="CCDS" id="CCDS50122.1"/>
<dbReference type="PIR" id="JC7285">
    <property type="entry name" value="JC7285"/>
</dbReference>
<dbReference type="RefSeq" id="NP_001139451.1">
    <property type="nucleotide sequence ID" value="NM_001145979.1"/>
</dbReference>
<dbReference type="RefSeq" id="NP_001397083.1">
    <property type="nucleotide sequence ID" value="NM_001410154.1"/>
</dbReference>
<dbReference type="RefSeq" id="NP_062527.2">
    <property type="nucleotide sequence ID" value="NM_019581.4"/>
</dbReference>
<dbReference type="SMR" id="Q3UJK4"/>
<dbReference type="DIP" id="DIP-61685N"/>
<dbReference type="FunCoup" id="Q3UJK4">
    <property type="interactions" value="2421"/>
</dbReference>
<dbReference type="IntAct" id="Q3UJK4">
    <property type="interactions" value="1"/>
</dbReference>
<dbReference type="STRING" id="10090.ENSMUSP00000024748"/>
<dbReference type="GlyGen" id="Q3UJK4">
    <property type="glycosylation" value="1 site"/>
</dbReference>
<dbReference type="iPTMnet" id="Q3UJK4"/>
<dbReference type="PhosphoSitePlus" id="Q3UJK4"/>
<dbReference type="PaxDb" id="10090-ENSMUSP00000024748"/>
<dbReference type="ProteomicsDB" id="271346"/>
<dbReference type="Pumba" id="Q3UJK4"/>
<dbReference type="Antibodypedia" id="30525">
    <property type="antibodies" value="180 antibodies from 27 providers"/>
</dbReference>
<dbReference type="Ensembl" id="ENSMUST00000024748.14">
    <property type="protein sequence ID" value="ENSMUSP00000024748.8"/>
    <property type="gene ID" value="ENSMUSG00000023952.14"/>
</dbReference>
<dbReference type="GeneID" id="56055"/>
<dbReference type="KEGG" id="mmu:56055"/>
<dbReference type="UCSC" id="uc008crw.2">
    <property type="organism name" value="mouse"/>
</dbReference>
<dbReference type="AGR" id="MGI:1860138"/>
<dbReference type="CTD" id="54676"/>
<dbReference type="MGI" id="MGI:1860138">
    <property type="gene designation" value="Gtpbp2"/>
</dbReference>
<dbReference type="VEuPathDB" id="HostDB:ENSMUSG00000023952"/>
<dbReference type="eggNOG" id="KOG1143">
    <property type="taxonomic scope" value="Eukaryota"/>
</dbReference>
<dbReference type="GeneTree" id="ENSGT00940000155636"/>
<dbReference type="HOGENOM" id="CLU_012821_1_1_1"/>
<dbReference type="InParanoid" id="Q3UJK4"/>
<dbReference type="OMA" id="ENMPMKI"/>
<dbReference type="OrthoDB" id="248233at2759"/>
<dbReference type="PhylomeDB" id="Q3UJK4"/>
<dbReference type="TreeFam" id="TF350446"/>
<dbReference type="Reactome" id="R-MMU-114608">
    <property type="pathway name" value="Platelet degranulation"/>
</dbReference>
<dbReference type="BioGRID-ORCS" id="56055">
    <property type="hits" value="3 hits in 78 CRISPR screens"/>
</dbReference>
<dbReference type="PRO" id="PR:Q3UJK4"/>
<dbReference type="Proteomes" id="UP000000589">
    <property type="component" value="Chromosome 17"/>
</dbReference>
<dbReference type="RNAct" id="Q3UJK4">
    <property type="molecule type" value="protein"/>
</dbReference>
<dbReference type="Bgee" id="ENSMUSG00000023952">
    <property type="expression patterns" value="Expressed in retinal neural layer and 267 other cell types or tissues"/>
</dbReference>
<dbReference type="ExpressionAtlas" id="Q3UJK4">
    <property type="expression patterns" value="baseline and differential"/>
</dbReference>
<dbReference type="GO" id="GO:1904678">
    <property type="term" value="F:alpha-aminoacyl-tRNA binding"/>
    <property type="evidence" value="ECO:0007669"/>
    <property type="project" value="Ensembl"/>
</dbReference>
<dbReference type="GO" id="GO:0005525">
    <property type="term" value="F:GTP binding"/>
    <property type="evidence" value="ECO:0000250"/>
    <property type="project" value="MGI"/>
</dbReference>
<dbReference type="GO" id="GO:0003924">
    <property type="term" value="F:GTPase activity"/>
    <property type="evidence" value="ECO:0007669"/>
    <property type="project" value="InterPro"/>
</dbReference>
<dbReference type="GO" id="GO:0042802">
    <property type="term" value="F:identical protein binding"/>
    <property type="evidence" value="ECO:0007669"/>
    <property type="project" value="Ensembl"/>
</dbReference>
<dbReference type="GO" id="GO:0070966">
    <property type="term" value="P:nuclear-transcribed mRNA catabolic process, no-go decay"/>
    <property type="evidence" value="ECO:0000315"/>
    <property type="project" value="MGI"/>
</dbReference>
<dbReference type="GO" id="GO:0072344">
    <property type="term" value="P:rescue of stalled ribosome"/>
    <property type="evidence" value="ECO:0000315"/>
    <property type="project" value="MGI"/>
</dbReference>
<dbReference type="CDD" id="cd04165">
    <property type="entry name" value="GTPBP1_like"/>
    <property type="match status" value="1"/>
</dbReference>
<dbReference type="CDD" id="cd03694">
    <property type="entry name" value="GTPBP_II"/>
    <property type="match status" value="1"/>
</dbReference>
<dbReference type="CDD" id="cd03708">
    <property type="entry name" value="GTPBP_III"/>
    <property type="match status" value="1"/>
</dbReference>
<dbReference type="FunFam" id="2.40.30.10:FF:000058">
    <property type="entry name" value="GTP binding protein 2"/>
    <property type="match status" value="1"/>
</dbReference>
<dbReference type="FunFam" id="2.40.30.10:FF:000014">
    <property type="entry name" value="Probable GTP-binding protein 1"/>
    <property type="match status" value="1"/>
</dbReference>
<dbReference type="FunFam" id="3.40.50.300:FF:000091">
    <property type="entry name" value="Probable GTP-binding protein 1"/>
    <property type="match status" value="1"/>
</dbReference>
<dbReference type="Gene3D" id="3.40.50.300">
    <property type="entry name" value="P-loop containing nucleotide triphosphate hydrolases"/>
    <property type="match status" value="1"/>
</dbReference>
<dbReference type="Gene3D" id="2.40.30.10">
    <property type="entry name" value="Translation factors"/>
    <property type="match status" value="2"/>
</dbReference>
<dbReference type="InterPro" id="IPR050055">
    <property type="entry name" value="EF-Tu_GTPase"/>
</dbReference>
<dbReference type="InterPro" id="IPR035531">
    <property type="entry name" value="GTPBP1-like"/>
</dbReference>
<dbReference type="InterPro" id="IPR027417">
    <property type="entry name" value="P-loop_NTPase"/>
</dbReference>
<dbReference type="InterPro" id="IPR000795">
    <property type="entry name" value="T_Tr_GTP-bd_dom"/>
</dbReference>
<dbReference type="InterPro" id="IPR009000">
    <property type="entry name" value="Transl_B-barrel_sf"/>
</dbReference>
<dbReference type="InterPro" id="IPR009001">
    <property type="entry name" value="Transl_elong_EF1A/Init_IF2_C"/>
</dbReference>
<dbReference type="PANTHER" id="PTHR43721">
    <property type="entry name" value="ELONGATION FACTOR TU-RELATED"/>
    <property type="match status" value="1"/>
</dbReference>
<dbReference type="PANTHER" id="PTHR43721:SF3">
    <property type="entry name" value="GTP-BINDING PROTEIN 2"/>
    <property type="match status" value="1"/>
</dbReference>
<dbReference type="Pfam" id="PF00009">
    <property type="entry name" value="GTP_EFTU"/>
    <property type="match status" value="1"/>
</dbReference>
<dbReference type="SUPFAM" id="SSF50465">
    <property type="entry name" value="EF-Tu/eEF-1alpha/eIF2-gamma C-terminal domain"/>
    <property type="match status" value="1"/>
</dbReference>
<dbReference type="SUPFAM" id="SSF52540">
    <property type="entry name" value="P-loop containing nucleoside triphosphate hydrolases"/>
    <property type="match status" value="1"/>
</dbReference>
<dbReference type="SUPFAM" id="SSF50447">
    <property type="entry name" value="Translation proteins"/>
    <property type="match status" value="1"/>
</dbReference>
<dbReference type="PROSITE" id="PS51722">
    <property type="entry name" value="G_TR_2"/>
    <property type="match status" value="1"/>
</dbReference>
<proteinExistence type="evidence at protein level"/>
<gene>
    <name evidence="11" type="primary">Gtpbp2</name>
</gene>
<sequence>MDSRVSELFGGCCRPGGGPAMGGNLKARGAGGSSSCGGPKGKKKNGRNRGGKANNPPYLPPEAEDGNIEYKLKLVNPSQYRFEHLVTQMKWRLQEGRGEAVYQIGVEDNGLLVGLAEEEMRASLKTLHRMAEKVGADITVLREREVDYDSDVPRKITEVLVRKVPDNQQFLDLRVAVLGNVDSGKSTLLGVLTQGELDNGRGRARLNLFRHLHEIQSGRTSSISFEILGFNSKGEVVNYSDSRTAEEICESSSKMITFIDLAGHHKYLHTTIFGLTSYCPDCALLLVSANTGIAGTTREHLGLALALKVPFFIVVSKVDLCAKTTVERTVRQLERVLKQPGCHKVPMLVTSEDDAVTAAQQFAQSPNVTPIFTLSSVSGESLDLLKVFLNILPPLTNSKEQEELMQQLTEFQVDEIYTVPEVGTVVGGTLSSGICREGDQLVVGPTDDGCFLELRVCSIQRNRSACRVLRAGQAATLALGDFDRALLRKGMVMVSPEMNPTICSVFEAEIVLLFHATTFRRGFQVTVHVGNVRQTAVVEKIHAKDKLRTGEKAVVRFRFLKHPEYLKVGAKLLFREGVTKGIGHVTDVQAITAGEAQATMGF</sequence>
<name>GTPB2_MOUSE</name>
<evidence type="ECO:0000250" key="1">
    <source>
        <dbReference type="UniProtKB" id="O08582"/>
    </source>
</evidence>
<evidence type="ECO:0000255" key="2">
    <source>
        <dbReference type="PROSITE-ProRule" id="PRU01059"/>
    </source>
</evidence>
<evidence type="ECO:0000256" key="3">
    <source>
        <dbReference type="SAM" id="MobiDB-lite"/>
    </source>
</evidence>
<evidence type="ECO:0000269" key="4">
    <source>
    </source>
</evidence>
<evidence type="ECO:0000269" key="5">
    <source>
    </source>
</evidence>
<evidence type="ECO:0000305" key="6"/>
<evidence type="ECO:0000312" key="7">
    <source>
        <dbReference type="EMBL" id="AAF78885.1"/>
    </source>
</evidence>
<evidence type="ECO:0000312" key="8">
    <source>
        <dbReference type="EMBL" id="AAH49089.1"/>
    </source>
</evidence>
<evidence type="ECO:0000312" key="9">
    <source>
        <dbReference type="EMBL" id="BAB12430.1"/>
    </source>
</evidence>
<evidence type="ECO:0000312" key="10">
    <source>
        <dbReference type="EMBL" id="BAE27151.1"/>
    </source>
</evidence>
<evidence type="ECO:0000312" key="11">
    <source>
        <dbReference type="MGI" id="MGI:1860138"/>
    </source>
</evidence>
<accession>Q3UJK4</accession>
<accession>Q9EST7</accession>
<accession>Q9JIX7</accession>
<protein>
    <recommendedName>
        <fullName>GTP-binding protein 2</fullName>
    </recommendedName>
    <alternativeName>
        <fullName>GTP-binding-like protein 2</fullName>
    </alternativeName>
</protein>